<dbReference type="EC" id="4.3.2.1" evidence="1"/>
<dbReference type="EMBL" id="CP000746">
    <property type="protein sequence ID" value="ABR73632.1"/>
    <property type="molecule type" value="Genomic_DNA"/>
</dbReference>
<dbReference type="RefSeq" id="WP_011978908.1">
    <property type="nucleotide sequence ID" value="NC_009655.1"/>
</dbReference>
<dbReference type="SMR" id="A6VKY5"/>
<dbReference type="STRING" id="339671.Asuc_0253"/>
<dbReference type="KEGG" id="asu:Asuc_0253"/>
<dbReference type="eggNOG" id="COG0165">
    <property type="taxonomic scope" value="Bacteria"/>
</dbReference>
<dbReference type="HOGENOM" id="CLU_027272_2_3_6"/>
<dbReference type="OrthoDB" id="9769623at2"/>
<dbReference type="UniPathway" id="UPA00068">
    <property type="reaction ID" value="UER00114"/>
</dbReference>
<dbReference type="Proteomes" id="UP000001114">
    <property type="component" value="Chromosome"/>
</dbReference>
<dbReference type="GO" id="GO:0005829">
    <property type="term" value="C:cytosol"/>
    <property type="evidence" value="ECO:0007669"/>
    <property type="project" value="TreeGrafter"/>
</dbReference>
<dbReference type="GO" id="GO:0004056">
    <property type="term" value="F:argininosuccinate lyase activity"/>
    <property type="evidence" value="ECO:0007669"/>
    <property type="project" value="UniProtKB-UniRule"/>
</dbReference>
<dbReference type="GO" id="GO:0042450">
    <property type="term" value="P:arginine biosynthetic process via ornithine"/>
    <property type="evidence" value="ECO:0007669"/>
    <property type="project" value="InterPro"/>
</dbReference>
<dbReference type="GO" id="GO:0006526">
    <property type="term" value="P:L-arginine biosynthetic process"/>
    <property type="evidence" value="ECO:0007669"/>
    <property type="project" value="UniProtKB-UniRule"/>
</dbReference>
<dbReference type="CDD" id="cd01359">
    <property type="entry name" value="Argininosuccinate_lyase"/>
    <property type="match status" value="1"/>
</dbReference>
<dbReference type="FunFam" id="1.10.40.30:FF:000001">
    <property type="entry name" value="Argininosuccinate lyase"/>
    <property type="match status" value="1"/>
</dbReference>
<dbReference type="FunFam" id="1.20.200.10:FF:000006">
    <property type="entry name" value="Argininosuccinate lyase"/>
    <property type="match status" value="1"/>
</dbReference>
<dbReference type="Gene3D" id="1.10.40.30">
    <property type="entry name" value="Fumarase/aspartase (C-terminal domain)"/>
    <property type="match status" value="1"/>
</dbReference>
<dbReference type="Gene3D" id="1.20.200.10">
    <property type="entry name" value="Fumarase/aspartase (Central domain)"/>
    <property type="match status" value="1"/>
</dbReference>
<dbReference type="Gene3D" id="1.10.275.10">
    <property type="entry name" value="Fumarase/aspartase (N-terminal domain)"/>
    <property type="match status" value="1"/>
</dbReference>
<dbReference type="HAMAP" id="MF_00006">
    <property type="entry name" value="Arg_succ_lyase"/>
    <property type="match status" value="1"/>
</dbReference>
<dbReference type="InterPro" id="IPR029419">
    <property type="entry name" value="Arg_succ_lyase_C"/>
</dbReference>
<dbReference type="InterPro" id="IPR009049">
    <property type="entry name" value="Argininosuccinate_lyase"/>
</dbReference>
<dbReference type="InterPro" id="IPR024083">
    <property type="entry name" value="Fumarase/histidase_N"/>
</dbReference>
<dbReference type="InterPro" id="IPR020557">
    <property type="entry name" value="Fumarate_lyase_CS"/>
</dbReference>
<dbReference type="InterPro" id="IPR000362">
    <property type="entry name" value="Fumarate_lyase_fam"/>
</dbReference>
<dbReference type="InterPro" id="IPR022761">
    <property type="entry name" value="Fumarate_lyase_N"/>
</dbReference>
<dbReference type="InterPro" id="IPR008948">
    <property type="entry name" value="L-Aspartase-like"/>
</dbReference>
<dbReference type="NCBIfam" id="TIGR00838">
    <property type="entry name" value="argH"/>
    <property type="match status" value="1"/>
</dbReference>
<dbReference type="NCBIfam" id="NF008964">
    <property type="entry name" value="PRK12308.1"/>
    <property type="match status" value="1"/>
</dbReference>
<dbReference type="PANTHER" id="PTHR43814">
    <property type="entry name" value="ARGININOSUCCINATE LYASE"/>
    <property type="match status" value="1"/>
</dbReference>
<dbReference type="PANTHER" id="PTHR43814:SF1">
    <property type="entry name" value="ARGININOSUCCINATE LYASE"/>
    <property type="match status" value="1"/>
</dbReference>
<dbReference type="Pfam" id="PF14698">
    <property type="entry name" value="ASL_C2"/>
    <property type="match status" value="1"/>
</dbReference>
<dbReference type="Pfam" id="PF00206">
    <property type="entry name" value="Lyase_1"/>
    <property type="match status" value="1"/>
</dbReference>
<dbReference type="PRINTS" id="PR00145">
    <property type="entry name" value="ARGSUCLYASE"/>
</dbReference>
<dbReference type="PRINTS" id="PR00149">
    <property type="entry name" value="FUMRATELYASE"/>
</dbReference>
<dbReference type="SUPFAM" id="SSF48557">
    <property type="entry name" value="L-aspartase-like"/>
    <property type="match status" value="1"/>
</dbReference>
<dbReference type="PROSITE" id="PS00163">
    <property type="entry name" value="FUMARATE_LYASES"/>
    <property type="match status" value="1"/>
</dbReference>
<name>ARLY_ACTSZ</name>
<organism>
    <name type="scientific">Actinobacillus succinogenes (strain ATCC 55618 / DSM 22257 / CCUG 43843 / 130Z)</name>
    <dbReference type="NCBI Taxonomy" id="339671"/>
    <lineage>
        <taxon>Bacteria</taxon>
        <taxon>Pseudomonadati</taxon>
        <taxon>Pseudomonadota</taxon>
        <taxon>Gammaproteobacteria</taxon>
        <taxon>Pasteurellales</taxon>
        <taxon>Pasteurellaceae</taxon>
        <taxon>Actinobacillus</taxon>
    </lineage>
</organism>
<evidence type="ECO:0000255" key="1">
    <source>
        <dbReference type="HAMAP-Rule" id="MF_00006"/>
    </source>
</evidence>
<feature type="chain" id="PRO_1000070918" description="Argininosuccinate lyase">
    <location>
        <begin position="1"/>
        <end position="460"/>
    </location>
</feature>
<protein>
    <recommendedName>
        <fullName evidence="1">Argininosuccinate lyase</fullName>
        <shortName evidence="1">ASAL</shortName>
        <ecNumber evidence="1">4.3.2.1</ecNumber>
    </recommendedName>
    <alternativeName>
        <fullName evidence="1">Arginosuccinase</fullName>
    </alternativeName>
</protein>
<accession>A6VKY5</accession>
<reference key="1">
    <citation type="journal article" date="2010" name="BMC Genomics">
        <title>A genomic perspective on the potential of Actinobacillus succinogenes for industrial succinate production.</title>
        <authorList>
            <person name="McKinlay J.B."/>
            <person name="Laivenieks M."/>
            <person name="Schindler B.D."/>
            <person name="McKinlay A.A."/>
            <person name="Siddaramappa S."/>
            <person name="Challacombe J.F."/>
            <person name="Lowry S.R."/>
            <person name="Clum A."/>
            <person name="Lapidus A.L."/>
            <person name="Burkhart K.B."/>
            <person name="Harkins V."/>
            <person name="Vieille C."/>
        </authorList>
    </citation>
    <scope>NUCLEOTIDE SEQUENCE [LARGE SCALE GENOMIC DNA]</scope>
    <source>
        <strain>ATCC 55618 / DSM 22257 / CCUG 43843 / 130Z</strain>
    </source>
</reference>
<keyword id="KW-0028">Amino-acid biosynthesis</keyword>
<keyword id="KW-0055">Arginine biosynthesis</keyword>
<keyword id="KW-0963">Cytoplasm</keyword>
<keyword id="KW-0456">Lyase</keyword>
<keyword id="KW-1185">Reference proteome</keyword>
<comment type="catalytic activity">
    <reaction evidence="1">
        <text>2-(N(omega)-L-arginino)succinate = fumarate + L-arginine</text>
        <dbReference type="Rhea" id="RHEA:24020"/>
        <dbReference type="ChEBI" id="CHEBI:29806"/>
        <dbReference type="ChEBI" id="CHEBI:32682"/>
        <dbReference type="ChEBI" id="CHEBI:57472"/>
        <dbReference type="EC" id="4.3.2.1"/>
    </reaction>
</comment>
<comment type="pathway">
    <text evidence="1">Amino-acid biosynthesis; L-arginine biosynthesis; L-arginine from L-ornithine and carbamoyl phosphate: step 3/3.</text>
</comment>
<comment type="subcellular location">
    <subcellularLocation>
        <location evidence="1">Cytoplasm</location>
    </subcellularLocation>
</comment>
<comment type="similarity">
    <text evidence="1">Belongs to the lyase 1 family. Argininosuccinate lyase subfamily.</text>
</comment>
<proteinExistence type="inferred from homology"/>
<sequence length="460" mass="51334">MALWGGRFTQAADKRFKDFNDSLRFDYRLAEQDIEGSIGWSKALVSVNILTQDEQRQLEKALNELLIEVRSNPQAILQDDAEDIHSWVESKLIDKVGNLGKKLHTGRSRNDQVALDIKMWCKAQVLELQKTVRELQAKLVLTAENTQHAVMPGYTHLQRAQPISFAHWCMAYVEMLERDYTRLGDAYQRMNACPLGSGALAGTAYPIDREQLAQDLDFASATRNSLDSVSDRDHIIELLSTASLSMAHLSRFAEDMIIFNSGEADFVELSDRVTSGSSLMPQKKNPDACELIRGKTGRVIGSLMGMLTTVKGLPLAYNKDMQEDKEGIFDALDTWHDCLTMAAFVLEDIKVNVERTREAALKGYSNATELADYLVAKGVPFRDSHHIVGETVVYAIKVHKGLEDLTVDEFRQFSDVVSDDVYDILSLQSCLDKRCAKGGVSPLRVAEAIADAKQRIGLNA</sequence>
<gene>
    <name evidence="1" type="primary">argH</name>
    <name type="ordered locus">Asuc_0253</name>
</gene>